<feature type="chain" id="PRO_1000055758" description="Large ribosomal subunit protein bL17">
    <location>
        <begin position="1"/>
        <end position="146"/>
    </location>
</feature>
<feature type="region of interest" description="Disordered" evidence="2">
    <location>
        <begin position="118"/>
        <end position="146"/>
    </location>
</feature>
<feature type="compositionally biased region" description="Acidic residues" evidence="2">
    <location>
        <begin position="134"/>
        <end position="146"/>
    </location>
</feature>
<reference key="1">
    <citation type="submission" date="2007-05" db="EMBL/GenBank/DDBJ databases">
        <title>Complete sequence of chromosome of Acidiphilium cryptum JF-5.</title>
        <authorList>
            <consortium name="US DOE Joint Genome Institute"/>
            <person name="Copeland A."/>
            <person name="Lucas S."/>
            <person name="Lapidus A."/>
            <person name="Barry K."/>
            <person name="Detter J.C."/>
            <person name="Glavina del Rio T."/>
            <person name="Hammon N."/>
            <person name="Israni S."/>
            <person name="Dalin E."/>
            <person name="Tice H."/>
            <person name="Pitluck S."/>
            <person name="Sims D."/>
            <person name="Brettin T."/>
            <person name="Bruce D."/>
            <person name="Han C."/>
            <person name="Schmutz J."/>
            <person name="Larimer F."/>
            <person name="Land M."/>
            <person name="Hauser L."/>
            <person name="Kyrpides N."/>
            <person name="Kim E."/>
            <person name="Magnuson T."/>
            <person name="Richardson P."/>
        </authorList>
    </citation>
    <scope>NUCLEOTIDE SEQUENCE [LARGE SCALE GENOMIC DNA]</scope>
    <source>
        <strain>JF-5</strain>
    </source>
</reference>
<gene>
    <name evidence="1" type="primary">rplQ</name>
    <name type="ordered locus">Acry_1921</name>
</gene>
<keyword id="KW-1185">Reference proteome</keyword>
<keyword id="KW-0687">Ribonucleoprotein</keyword>
<keyword id="KW-0689">Ribosomal protein</keyword>
<sequence length="146" mass="15796">MRHGLAGRKLGVTASHRAAMFRNMAVALLKHEQITTTLPKAKELRPVAEKLITLGKRGGLHARRQAHALLRDDVIVAKLFDSLADRYKERQGGYTRVLKAGMRYGDAADMAVIELVDRDPAAKGQDSGPKPEVASDEDEAGEAAAA</sequence>
<evidence type="ECO:0000255" key="1">
    <source>
        <dbReference type="HAMAP-Rule" id="MF_01368"/>
    </source>
</evidence>
<evidence type="ECO:0000256" key="2">
    <source>
        <dbReference type="SAM" id="MobiDB-lite"/>
    </source>
</evidence>
<evidence type="ECO:0000305" key="3"/>
<organism>
    <name type="scientific">Acidiphilium cryptum (strain JF-5)</name>
    <dbReference type="NCBI Taxonomy" id="349163"/>
    <lineage>
        <taxon>Bacteria</taxon>
        <taxon>Pseudomonadati</taxon>
        <taxon>Pseudomonadota</taxon>
        <taxon>Alphaproteobacteria</taxon>
        <taxon>Acetobacterales</taxon>
        <taxon>Acidocellaceae</taxon>
        <taxon>Acidiphilium</taxon>
    </lineage>
</organism>
<protein>
    <recommendedName>
        <fullName evidence="1">Large ribosomal subunit protein bL17</fullName>
    </recommendedName>
    <alternativeName>
        <fullName evidence="3">50S ribosomal protein L17</fullName>
    </alternativeName>
</protein>
<proteinExistence type="inferred from homology"/>
<name>RL17_ACICJ</name>
<comment type="subunit">
    <text evidence="1">Part of the 50S ribosomal subunit. Contacts protein L32.</text>
</comment>
<comment type="similarity">
    <text evidence="1">Belongs to the bacterial ribosomal protein bL17 family.</text>
</comment>
<dbReference type="EMBL" id="CP000697">
    <property type="protein sequence ID" value="ABQ31122.1"/>
    <property type="molecule type" value="Genomic_DNA"/>
</dbReference>
<dbReference type="RefSeq" id="WP_007424198.1">
    <property type="nucleotide sequence ID" value="NC_009484.1"/>
</dbReference>
<dbReference type="SMR" id="A5FZU0"/>
<dbReference type="STRING" id="349163.Acry_1921"/>
<dbReference type="KEGG" id="acr:Acry_1921"/>
<dbReference type="eggNOG" id="COG0203">
    <property type="taxonomic scope" value="Bacteria"/>
</dbReference>
<dbReference type="HOGENOM" id="CLU_074407_2_2_5"/>
<dbReference type="Proteomes" id="UP000000245">
    <property type="component" value="Chromosome"/>
</dbReference>
<dbReference type="GO" id="GO:0022625">
    <property type="term" value="C:cytosolic large ribosomal subunit"/>
    <property type="evidence" value="ECO:0007669"/>
    <property type="project" value="TreeGrafter"/>
</dbReference>
<dbReference type="GO" id="GO:0003735">
    <property type="term" value="F:structural constituent of ribosome"/>
    <property type="evidence" value="ECO:0007669"/>
    <property type="project" value="InterPro"/>
</dbReference>
<dbReference type="GO" id="GO:0006412">
    <property type="term" value="P:translation"/>
    <property type="evidence" value="ECO:0007669"/>
    <property type="project" value="UniProtKB-UniRule"/>
</dbReference>
<dbReference type="FunFam" id="3.90.1030.10:FF:000001">
    <property type="entry name" value="50S ribosomal protein L17"/>
    <property type="match status" value="1"/>
</dbReference>
<dbReference type="Gene3D" id="3.90.1030.10">
    <property type="entry name" value="Ribosomal protein L17"/>
    <property type="match status" value="1"/>
</dbReference>
<dbReference type="HAMAP" id="MF_01368">
    <property type="entry name" value="Ribosomal_bL17"/>
    <property type="match status" value="1"/>
</dbReference>
<dbReference type="InterPro" id="IPR000456">
    <property type="entry name" value="Ribosomal_bL17"/>
</dbReference>
<dbReference type="InterPro" id="IPR047859">
    <property type="entry name" value="Ribosomal_bL17_CS"/>
</dbReference>
<dbReference type="InterPro" id="IPR036373">
    <property type="entry name" value="Ribosomal_bL17_sf"/>
</dbReference>
<dbReference type="NCBIfam" id="TIGR00059">
    <property type="entry name" value="L17"/>
    <property type="match status" value="1"/>
</dbReference>
<dbReference type="PANTHER" id="PTHR14413:SF16">
    <property type="entry name" value="LARGE RIBOSOMAL SUBUNIT PROTEIN BL17M"/>
    <property type="match status" value="1"/>
</dbReference>
<dbReference type="PANTHER" id="PTHR14413">
    <property type="entry name" value="RIBOSOMAL PROTEIN L17"/>
    <property type="match status" value="1"/>
</dbReference>
<dbReference type="Pfam" id="PF01196">
    <property type="entry name" value="Ribosomal_L17"/>
    <property type="match status" value="1"/>
</dbReference>
<dbReference type="SUPFAM" id="SSF64263">
    <property type="entry name" value="Prokaryotic ribosomal protein L17"/>
    <property type="match status" value="1"/>
</dbReference>
<dbReference type="PROSITE" id="PS01167">
    <property type="entry name" value="RIBOSOMAL_L17"/>
    <property type="match status" value="1"/>
</dbReference>
<accession>A5FZU0</accession>